<protein>
    <recommendedName>
        <fullName evidence="1">Cytoplasmic envelopment protein 3</fullName>
    </recommendedName>
</protein>
<evidence type="ECO:0000255" key="1">
    <source>
        <dbReference type="HAMAP-Rule" id="MF_04041"/>
    </source>
</evidence>
<evidence type="ECO:0000256" key="2">
    <source>
        <dbReference type="SAM" id="MobiDB-lite"/>
    </source>
</evidence>
<evidence type="ECO:0000269" key="3">
    <source>
    </source>
</evidence>
<evidence type="ECO:0000269" key="4">
    <source>
    </source>
</evidence>
<evidence type="ECO:0000269" key="5">
    <source>
    </source>
</evidence>
<gene>
    <name type="primary">UL99</name>
</gene>
<proteinExistence type="evidence at protein level"/>
<name>CEP3_HCMVA</name>
<reference key="1">
    <citation type="journal article" date="1988" name="J. Virol.">
        <title>Identification and procaryotic expression of the gene coding for the highly immunogenic 28-kilodalton structural phosphoprotein (pp28) of human cytomegalovirus.</title>
        <authorList>
            <person name="Meyer H."/>
            <person name="Bankier A.T."/>
            <person name="Landini M.P."/>
            <person name="Brown C.M."/>
            <person name="Barrell B.G."/>
            <person name="Rueger B."/>
            <person name="Mach M."/>
        </authorList>
    </citation>
    <scope>NUCLEOTIDE SEQUENCE [GENOMIC DNA]</scope>
    <scope>PHOSPHORYLATION</scope>
</reference>
<reference key="2">
    <citation type="journal article" date="1990" name="Curr. Top. Microbiol. Immunol.">
        <title>Analysis of the protein-coding content of the sequence of human cytomegalovirus strain AD169.</title>
        <authorList>
            <person name="Chee M.S."/>
            <person name="Bankier A.T."/>
            <person name="Beck S."/>
            <person name="Bohni R."/>
            <person name="Brown C.M."/>
            <person name="Cerny R."/>
            <person name="Horsnell T."/>
            <person name="Hutchison C.A. III"/>
            <person name="Kouzarides T."/>
            <person name="Martignetti J.A."/>
            <person name="Preddie E."/>
            <person name="Satchwell S.C."/>
            <person name="Tomlinson P."/>
            <person name="Weston K.M."/>
            <person name="Barrell B.G."/>
        </authorList>
    </citation>
    <scope>NUCLEOTIDE SEQUENCE [LARGE SCALE GENOMIC DNA]</scope>
</reference>
<reference key="3">
    <citation type="journal article" date="2003" name="J. Gen. Virol.">
        <title>The human cytomegalovirus genome revisited: comparison with the chimpanzee cytomegalovirus genome.</title>
        <authorList>
            <person name="Davison A.J."/>
            <person name="Dolan A."/>
            <person name="Akter P."/>
            <person name="Addison C."/>
            <person name="Dargan D.J."/>
            <person name="Alcendor D.J."/>
            <person name="McGeoch D.J."/>
            <person name="Hayward G.S."/>
        </authorList>
    </citation>
    <scope>GENOME REANNOTATION</scope>
</reference>
<reference key="4">
    <citation type="journal article" date="2003" name="J. Gen. Virol.">
        <authorList>
            <person name="Davison A.J."/>
            <person name="Dolan A."/>
            <person name="Akter P."/>
            <person name="Addison C."/>
            <person name="Dargan D.J."/>
            <person name="Alcendor D.J."/>
            <person name="McGeoch D.J."/>
            <person name="Hayward G.S."/>
        </authorList>
    </citation>
    <scope>ERRATUM OF PUBMED:12533697</scope>
</reference>
<reference key="5">
    <citation type="journal article" date="2003" name="J. Virol.">
        <title>Human cytomegalovirus UL99-encoded pp28 is required for the cytoplasmic envelopment of tegument-associated capsids.</title>
        <authorList>
            <person name="Silva M.C."/>
            <person name="Yu Q.-C."/>
            <person name="Enquist L."/>
            <person name="Shenk T."/>
        </authorList>
    </citation>
    <scope>FUNCTION</scope>
</reference>
<reference key="6">
    <citation type="journal article" date="2004" name="J. Virol.">
        <title>An acidic cluster of human cytomegalovirus UL99 tegument protein is required for trafficking and function.</title>
        <authorList>
            <person name="Jones T.R."/>
            <person name="Lee S.-W."/>
        </authorList>
    </citation>
    <scope>FUNCTION</scope>
    <scope>MYRISTOYLATION AT GLY-2</scope>
</reference>
<reference key="7">
    <citation type="journal article" date="2012" name="J. Virol.">
        <title>Interaction between the human cytomegalovirus tegument proteins UL94 and UL99 is essential for virus replication.</title>
        <authorList>
            <person name="Phillips S.L."/>
            <person name="Cygnar D."/>
            <person name="Thomas A."/>
            <person name="Bresnahan W.A."/>
        </authorList>
    </citation>
    <scope>FUNCTION</scope>
    <scope>INTERACTION WITH UL94</scope>
</reference>
<organism>
    <name type="scientific">Human cytomegalovirus (strain AD169)</name>
    <name type="common">HHV-5</name>
    <name type="synonym">Human herpesvirus 5</name>
    <dbReference type="NCBI Taxonomy" id="10360"/>
    <lineage>
        <taxon>Viruses</taxon>
        <taxon>Duplodnaviria</taxon>
        <taxon>Heunggongvirae</taxon>
        <taxon>Peploviricota</taxon>
        <taxon>Herviviricetes</taxon>
        <taxon>Herpesvirales</taxon>
        <taxon>Orthoherpesviridae</taxon>
        <taxon>Betaherpesvirinae</taxon>
        <taxon>Cytomegalovirus</taxon>
        <taxon>Cytomegalovirus humanbeta5</taxon>
        <taxon>Human cytomegalovirus</taxon>
    </lineage>
</organism>
<comment type="function">
    <text evidence="1 3 4 5">Plays an important role in the cytoplasmic envelopment of tegument proteins and capsids during the assembly and egress processes. Also participates in viral entry at the fusion step probably by regulating the core fusion machinery.</text>
</comment>
<comment type="subunit">
    <text evidence="1 5">Interacts with cytoplasmic envelopment protein 2; this interaction is essential for the proper localization of each protein to the assembly complex and thus for the production of infectious virus.</text>
</comment>
<comment type="subcellular location">
    <subcellularLocation>
        <location evidence="1">Virion tegument</location>
    </subcellularLocation>
    <subcellularLocation>
        <location evidence="1">Virion membrane</location>
        <topology evidence="1">Lipid-anchor</topology>
    </subcellularLocation>
    <subcellularLocation>
        <location evidence="1">Host cell membrane</location>
        <topology evidence="1">Lipid-anchor</topology>
        <orientation evidence="1">Cytoplasmic side</orientation>
    </subcellularLocation>
    <subcellularLocation>
        <location evidence="1">Host Golgi apparatus membrane</location>
        <topology evidence="1">Lipid-anchor</topology>
        <orientation evidence="1">Cytoplasmic side</orientation>
    </subcellularLocation>
    <text evidence="1">Virion membrane-associated tegument protein. Associates with host membrane lipids rafts. During virion morphogenesis, this protein probably accumulates in the endosomes and trans-Golgi where secondary envelopment occurs. It is probably transported to the cell surface from where it is endocytosed and directed to the trans-Golgi network (TGN).</text>
</comment>
<comment type="PTM">
    <text evidence="1 4">Myristoylation and palmitoylation (probably on one or more of the nearby cysteines at the N-terminus) enable membrane-binding and Golgi apparatus-specific targeting and are essential for efficient packaging.</text>
</comment>
<comment type="PTM">
    <text evidence="1">Phosphorylated. Phosphorylation does not seem to be required for recycling to the host Golgi apparatus. Packaging is selective for underphosphorylated forms.</text>
</comment>
<comment type="similarity">
    <text evidence="1">Belongs to the herpesviridae cytoplasmic envelopment protein 3 family.</text>
</comment>
<feature type="initiator methionine" description="Removed; by host" evidence="1">
    <location>
        <position position="1"/>
    </location>
</feature>
<feature type="chain" id="PRO_0000115342" description="Cytoplasmic envelopment protein 3" evidence="1">
    <location>
        <begin position="2"/>
        <end position="190"/>
    </location>
</feature>
<feature type="region of interest" description="Disordered" evidence="2">
    <location>
        <begin position="27"/>
        <end position="190"/>
    </location>
</feature>
<feature type="compositionally biased region" description="Polar residues" evidence="2">
    <location>
        <begin position="30"/>
        <end position="43"/>
    </location>
</feature>
<feature type="compositionally biased region" description="Acidic residues" evidence="2">
    <location>
        <begin position="44"/>
        <end position="58"/>
    </location>
</feature>
<feature type="compositionally biased region" description="Basic and acidic residues" evidence="2">
    <location>
        <begin position="80"/>
        <end position="90"/>
    </location>
</feature>
<feature type="compositionally biased region" description="Basic residues" evidence="2">
    <location>
        <begin position="108"/>
        <end position="123"/>
    </location>
</feature>
<feature type="compositionally biased region" description="Acidic residues" evidence="2">
    <location>
        <begin position="130"/>
        <end position="139"/>
    </location>
</feature>
<feature type="lipid moiety-binding region" description="N-myristoyl glycine; by host" evidence="1 4">
    <location>
        <position position="2"/>
    </location>
</feature>
<organismHost>
    <name type="scientific">Homo sapiens</name>
    <name type="common">Human</name>
    <dbReference type="NCBI Taxonomy" id="9606"/>
</organismHost>
<keyword id="KW-1032">Host cell membrane</keyword>
<keyword id="KW-1040">Host Golgi apparatus</keyword>
<keyword id="KW-1043">Host membrane</keyword>
<keyword id="KW-0449">Lipoprotein</keyword>
<keyword id="KW-0472">Membrane</keyword>
<keyword id="KW-0519">Myristate</keyword>
<keyword id="KW-0564">Palmitate</keyword>
<keyword id="KW-0597">Phosphoprotein</keyword>
<keyword id="KW-1185">Reference proteome</keyword>
<keyword id="KW-0946">Virion</keyword>
<keyword id="KW-0920">Virion tegument</keyword>
<dbReference type="EMBL" id="X17403">
    <property type="protein sequence ID" value="CAA35335.1"/>
    <property type="molecule type" value="Genomic_DNA"/>
</dbReference>
<dbReference type="EMBL" id="M21013">
    <property type="protein sequence ID" value="AAA45985.1"/>
    <property type="molecule type" value="Genomic_DNA"/>
</dbReference>
<dbReference type="EMBL" id="BK000394">
    <property type="protein sequence ID" value="DAA00196.1"/>
    <property type="molecule type" value="Genomic_DNA"/>
</dbReference>
<dbReference type="PIR" id="A28842">
    <property type="entry name" value="WMBE28"/>
</dbReference>
<dbReference type="iPTMnet" id="P13200"/>
<dbReference type="Proteomes" id="UP000008991">
    <property type="component" value="Segment"/>
</dbReference>
<dbReference type="Proteomes" id="UP000008992">
    <property type="component" value="Segment"/>
</dbReference>
<dbReference type="GO" id="GO:0044178">
    <property type="term" value="C:host cell Golgi membrane"/>
    <property type="evidence" value="ECO:0007669"/>
    <property type="project" value="UniProtKB-SubCell"/>
</dbReference>
<dbReference type="GO" id="GO:0020002">
    <property type="term" value="C:host cell plasma membrane"/>
    <property type="evidence" value="ECO:0007669"/>
    <property type="project" value="UniProtKB-SubCell"/>
</dbReference>
<dbReference type="GO" id="GO:0016020">
    <property type="term" value="C:membrane"/>
    <property type="evidence" value="ECO:0007669"/>
    <property type="project" value="UniProtKB-KW"/>
</dbReference>
<dbReference type="GO" id="GO:0019033">
    <property type="term" value="C:viral tegument"/>
    <property type="evidence" value="ECO:0007669"/>
    <property type="project" value="UniProtKB-SubCell"/>
</dbReference>
<dbReference type="GO" id="GO:0055036">
    <property type="term" value="C:virion membrane"/>
    <property type="evidence" value="ECO:0007669"/>
    <property type="project" value="UniProtKB-SubCell"/>
</dbReference>
<dbReference type="GO" id="GO:0046760">
    <property type="term" value="P:viral budding from Golgi membrane"/>
    <property type="evidence" value="ECO:0007669"/>
    <property type="project" value="UniProtKB-UniRule"/>
</dbReference>
<dbReference type="HAMAP" id="MF_04041">
    <property type="entry name" value="HSV_CEP3_betahv"/>
    <property type="match status" value="1"/>
</dbReference>
<dbReference type="InterPro" id="IPR034705">
    <property type="entry name" value="HSV_CEP3_betahv"/>
</dbReference>
<accession>P13200</accession>
<accession>Q7M6J2</accession>
<sequence length="190" mass="20923">MGAELCKRICCEFGTTPGEPLKDALGRQVSLRSYDNIPPTSSSDEGEDDDDGEDDDNEERQQKLRLCGSGCGGNDSSSGSHREATHDGSKKNAVRSTFREDKAPKPSKQSKKKKKPSKHHHHQQSSIMQETDDLDEEDTSIYLSPPPVPPVQVVAKRLPRPDTPRTPRQKKISQRPPTPGTKKPAASLPF</sequence>